<sequence length="257" mass="29783">MQKLESRGVILFNRNYRENDKLVKIFTKQAGKRMFFVRGGGSGKLSAVIQPLNIAEFMMTVNDEGLSFIEDYSQAESFKEITSDIFKLSYATYLAALTDAAIADGVVDAELFAFLEKTLVLMEEGLDYEILTNIFEIQVLDRFGVRLNFHECVFCHRVGLPFDFSYKFSGLLCPNHYEEDERRSHLDPNVPYLLDRFQGLSFEELRSISVKDEMKRKLRQFIDELYDNYVGIHLKSKKFIDNLNSWGHIMSKEDNAD</sequence>
<comment type="function">
    <text evidence="1">Involved in DNA repair and RecF pathway recombination.</text>
</comment>
<comment type="similarity">
    <text evidence="1">Belongs to the RecO family.</text>
</comment>
<reference key="1">
    <citation type="journal article" date="2006" name="Proc. Natl. Acad. Sci. U.S.A.">
        <title>Comparative genomics of the lactic acid bacteria.</title>
        <authorList>
            <person name="Makarova K.S."/>
            <person name="Slesarev A."/>
            <person name="Wolf Y.I."/>
            <person name="Sorokin A."/>
            <person name="Mirkin B."/>
            <person name="Koonin E.V."/>
            <person name="Pavlov A."/>
            <person name="Pavlova N."/>
            <person name="Karamychev V."/>
            <person name="Polouchine N."/>
            <person name="Shakhova V."/>
            <person name="Grigoriev I."/>
            <person name="Lou Y."/>
            <person name="Rohksar D."/>
            <person name="Lucas S."/>
            <person name="Huang K."/>
            <person name="Goodstein D.M."/>
            <person name="Hawkins T."/>
            <person name="Plengvidhya V."/>
            <person name="Welker D."/>
            <person name="Hughes J."/>
            <person name="Goh Y."/>
            <person name="Benson A."/>
            <person name="Baldwin K."/>
            <person name="Lee J.-H."/>
            <person name="Diaz-Muniz I."/>
            <person name="Dosti B."/>
            <person name="Smeianov V."/>
            <person name="Wechter W."/>
            <person name="Barabote R."/>
            <person name="Lorca G."/>
            <person name="Altermann E."/>
            <person name="Barrangou R."/>
            <person name="Ganesan B."/>
            <person name="Xie Y."/>
            <person name="Rawsthorne H."/>
            <person name="Tamir D."/>
            <person name="Parker C."/>
            <person name="Breidt F."/>
            <person name="Broadbent J.R."/>
            <person name="Hutkins R."/>
            <person name="O'Sullivan D."/>
            <person name="Steele J."/>
            <person name="Unlu G."/>
            <person name="Saier M.H. Jr."/>
            <person name="Klaenhammer T."/>
            <person name="Richardson P."/>
            <person name="Kozyavkin S."/>
            <person name="Weimer B.C."/>
            <person name="Mills D.A."/>
        </authorList>
    </citation>
    <scope>NUCLEOTIDE SEQUENCE [LARGE SCALE GENOMIC DNA]</scope>
    <source>
        <strain>ATCC BAA-491 / LMD-9</strain>
    </source>
</reference>
<protein>
    <recommendedName>
        <fullName evidence="1">DNA repair protein RecO</fullName>
    </recommendedName>
    <alternativeName>
        <fullName evidence="1">Recombination protein O</fullName>
    </alternativeName>
</protein>
<feature type="chain" id="PRO_1000012164" description="DNA repair protein RecO">
    <location>
        <begin position="1"/>
        <end position="257"/>
    </location>
</feature>
<evidence type="ECO:0000255" key="1">
    <source>
        <dbReference type="HAMAP-Rule" id="MF_00201"/>
    </source>
</evidence>
<proteinExistence type="inferred from homology"/>
<dbReference type="EMBL" id="CP000419">
    <property type="protein sequence ID" value="ABJ65418.1"/>
    <property type="molecule type" value="Genomic_DNA"/>
</dbReference>
<dbReference type="RefSeq" id="WP_011680587.1">
    <property type="nucleotide sequence ID" value="NC_008532.1"/>
</dbReference>
<dbReference type="SMR" id="Q03N04"/>
<dbReference type="KEGG" id="ste:STER_0046"/>
<dbReference type="HOGENOM" id="CLU_066632_4_0_9"/>
<dbReference type="GO" id="GO:0043590">
    <property type="term" value="C:bacterial nucleoid"/>
    <property type="evidence" value="ECO:0007669"/>
    <property type="project" value="TreeGrafter"/>
</dbReference>
<dbReference type="GO" id="GO:0006310">
    <property type="term" value="P:DNA recombination"/>
    <property type="evidence" value="ECO:0007669"/>
    <property type="project" value="UniProtKB-UniRule"/>
</dbReference>
<dbReference type="GO" id="GO:0006302">
    <property type="term" value="P:double-strand break repair"/>
    <property type="evidence" value="ECO:0007669"/>
    <property type="project" value="TreeGrafter"/>
</dbReference>
<dbReference type="Gene3D" id="2.40.50.140">
    <property type="entry name" value="Nucleic acid-binding proteins"/>
    <property type="match status" value="1"/>
</dbReference>
<dbReference type="Gene3D" id="1.20.1440.120">
    <property type="entry name" value="Recombination protein O, C-terminal domain"/>
    <property type="match status" value="1"/>
</dbReference>
<dbReference type="HAMAP" id="MF_00201">
    <property type="entry name" value="RecO"/>
    <property type="match status" value="1"/>
</dbReference>
<dbReference type="InterPro" id="IPR037278">
    <property type="entry name" value="ARFGAP/RecO"/>
</dbReference>
<dbReference type="InterPro" id="IPR022572">
    <property type="entry name" value="DNA_rep/recomb_RecO_N"/>
</dbReference>
<dbReference type="InterPro" id="IPR012340">
    <property type="entry name" value="NA-bd_OB-fold"/>
</dbReference>
<dbReference type="InterPro" id="IPR003717">
    <property type="entry name" value="RecO"/>
</dbReference>
<dbReference type="InterPro" id="IPR042242">
    <property type="entry name" value="RecO_C"/>
</dbReference>
<dbReference type="NCBIfam" id="TIGR00613">
    <property type="entry name" value="reco"/>
    <property type="match status" value="1"/>
</dbReference>
<dbReference type="PANTHER" id="PTHR33991">
    <property type="entry name" value="DNA REPAIR PROTEIN RECO"/>
    <property type="match status" value="1"/>
</dbReference>
<dbReference type="PANTHER" id="PTHR33991:SF1">
    <property type="entry name" value="DNA REPAIR PROTEIN RECO"/>
    <property type="match status" value="1"/>
</dbReference>
<dbReference type="Pfam" id="PF02565">
    <property type="entry name" value="RecO_C"/>
    <property type="match status" value="1"/>
</dbReference>
<dbReference type="Pfam" id="PF11967">
    <property type="entry name" value="RecO_N"/>
    <property type="match status" value="1"/>
</dbReference>
<dbReference type="SUPFAM" id="SSF57863">
    <property type="entry name" value="ArfGap/RecO-like zinc finger"/>
    <property type="match status" value="1"/>
</dbReference>
<dbReference type="SUPFAM" id="SSF50249">
    <property type="entry name" value="Nucleic acid-binding proteins"/>
    <property type="match status" value="1"/>
</dbReference>
<organism>
    <name type="scientific">Streptococcus thermophilus (strain ATCC BAA-491 / LMD-9)</name>
    <dbReference type="NCBI Taxonomy" id="322159"/>
    <lineage>
        <taxon>Bacteria</taxon>
        <taxon>Bacillati</taxon>
        <taxon>Bacillota</taxon>
        <taxon>Bacilli</taxon>
        <taxon>Lactobacillales</taxon>
        <taxon>Streptococcaceae</taxon>
        <taxon>Streptococcus</taxon>
    </lineage>
</organism>
<name>RECO_STRTD</name>
<accession>Q03N04</accession>
<gene>
    <name evidence="1" type="primary">recO</name>
    <name type="ordered locus">STER_0046</name>
</gene>
<keyword id="KW-0227">DNA damage</keyword>
<keyword id="KW-0233">DNA recombination</keyword>
<keyword id="KW-0234">DNA repair</keyword>